<accession>A2AVR2</accession>
<organism>
    <name type="scientific">Mus musculus</name>
    <name type="common">Mouse</name>
    <dbReference type="NCBI Taxonomy" id="10090"/>
    <lineage>
        <taxon>Eukaryota</taxon>
        <taxon>Metazoa</taxon>
        <taxon>Chordata</taxon>
        <taxon>Craniata</taxon>
        <taxon>Vertebrata</taxon>
        <taxon>Euteleostomi</taxon>
        <taxon>Mammalia</taxon>
        <taxon>Eutheria</taxon>
        <taxon>Euarchontoglires</taxon>
        <taxon>Glires</taxon>
        <taxon>Rodentia</taxon>
        <taxon>Myomorpha</taxon>
        <taxon>Muroidea</taxon>
        <taxon>Muridae</taxon>
        <taxon>Murinae</taxon>
        <taxon>Mus</taxon>
        <taxon>Mus</taxon>
    </lineage>
</organism>
<reference key="1">
    <citation type="journal article" date="2009" name="PLoS Biol.">
        <title>Lineage-specific biology revealed by a finished genome assembly of the mouse.</title>
        <authorList>
            <person name="Church D.M."/>
            <person name="Goodstadt L."/>
            <person name="Hillier L.W."/>
            <person name="Zody M.C."/>
            <person name="Goldstein S."/>
            <person name="She X."/>
            <person name="Bult C.J."/>
            <person name="Agarwala R."/>
            <person name="Cherry J.L."/>
            <person name="DiCuccio M."/>
            <person name="Hlavina W."/>
            <person name="Kapustin Y."/>
            <person name="Meric P."/>
            <person name="Maglott D."/>
            <person name="Birtle Z."/>
            <person name="Marques A.C."/>
            <person name="Graves T."/>
            <person name="Zhou S."/>
            <person name="Teague B."/>
            <person name="Potamousis K."/>
            <person name="Churas C."/>
            <person name="Place M."/>
            <person name="Herschleb J."/>
            <person name="Runnheim R."/>
            <person name="Forrest D."/>
            <person name="Amos-Landgraf J."/>
            <person name="Schwartz D.C."/>
            <person name="Cheng Z."/>
            <person name="Lindblad-Toh K."/>
            <person name="Eichler E.E."/>
            <person name="Ponting C.P."/>
        </authorList>
    </citation>
    <scope>NUCLEOTIDE SEQUENCE [LARGE SCALE GENOMIC DNA]</scope>
    <source>
        <strain>C57BL/6J</strain>
    </source>
</reference>
<dbReference type="EMBL" id="AL929585">
    <property type="status" value="NOT_ANNOTATED_CDS"/>
    <property type="molecule type" value="Genomic_DNA"/>
</dbReference>
<dbReference type="CCDS" id="CCDS51253.1"/>
<dbReference type="RefSeq" id="NP_001119959.1">
    <property type="nucleotide sequence ID" value="NM_001126487.1"/>
</dbReference>
<dbReference type="RefSeq" id="XP_006503264.1">
    <property type="nucleotide sequence ID" value="XM_006503201.1"/>
</dbReference>
<dbReference type="RefSeq" id="XP_011238863.1">
    <property type="nucleotide sequence ID" value="XM_011240561.4"/>
</dbReference>
<dbReference type="RefSeq" id="XP_011238864.1">
    <property type="nucleotide sequence ID" value="XM_011240562.3"/>
</dbReference>
<dbReference type="FunCoup" id="A2AVR2">
    <property type="interactions" value="250"/>
</dbReference>
<dbReference type="STRING" id="10090.ENSMUSP00000102382"/>
<dbReference type="GlyCosmos" id="A2AVR2">
    <property type="glycosylation" value="6 sites, No reported glycans"/>
</dbReference>
<dbReference type="GlyGen" id="A2AVR2">
    <property type="glycosylation" value="7 sites"/>
</dbReference>
<dbReference type="iPTMnet" id="A2AVR2"/>
<dbReference type="PhosphoSitePlus" id="A2AVR2"/>
<dbReference type="PaxDb" id="10090-ENSMUSP00000102382"/>
<dbReference type="ProteomicsDB" id="291408"/>
<dbReference type="Ensembl" id="ENSMUST00000106770.8">
    <property type="protein sequence ID" value="ENSMUSP00000102382.2"/>
    <property type="gene ID" value="ENSMUSG00000047502.15"/>
</dbReference>
<dbReference type="GeneID" id="381538"/>
<dbReference type="KEGG" id="mmu:381538"/>
<dbReference type="UCSC" id="uc012dia.1">
    <property type="organism name" value="mouse"/>
</dbReference>
<dbReference type="AGR" id="MGI:2685873"/>
<dbReference type="CTD" id="374977"/>
<dbReference type="MGI" id="MGI:2685873">
    <property type="gene designation" value="Mroh7"/>
</dbReference>
<dbReference type="VEuPathDB" id="HostDB:ENSMUSG00000047502"/>
<dbReference type="eggNOG" id="KOG2032">
    <property type="taxonomic scope" value="Eukaryota"/>
</dbReference>
<dbReference type="GeneTree" id="ENSGT00940000161775"/>
<dbReference type="HOGENOM" id="CLU_003474_0_0_1"/>
<dbReference type="InParanoid" id="A2AVR2"/>
<dbReference type="OMA" id="EASVCIC"/>
<dbReference type="OrthoDB" id="1884734at2759"/>
<dbReference type="PhylomeDB" id="A2AVR2"/>
<dbReference type="TreeFam" id="TF337538"/>
<dbReference type="BioGRID-ORCS" id="381538">
    <property type="hits" value="4 hits in 78 CRISPR screens"/>
</dbReference>
<dbReference type="ChiTaRS" id="Mroh7">
    <property type="organism name" value="mouse"/>
</dbReference>
<dbReference type="PRO" id="PR:A2AVR2"/>
<dbReference type="Proteomes" id="UP000000589">
    <property type="component" value="Chromosome 4"/>
</dbReference>
<dbReference type="RNAct" id="A2AVR2">
    <property type="molecule type" value="protein"/>
</dbReference>
<dbReference type="Bgee" id="ENSMUSG00000047502">
    <property type="expression patterns" value="Expressed in testis and 47 other cell types or tissues"/>
</dbReference>
<dbReference type="ExpressionAtlas" id="A2AVR2">
    <property type="expression patterns" value="baseline and differential"/>
</dbReference>
<dbReference type="GO" id="GO:0016020">
    <property type="term" value="C:membrane"/>
    <property type="evidence" value="ECO:0007669"/>
    <property type="project" value="UniProtKB-SubCell"/>
</dbReference>
<dbReference type="Gene3D" id="1.25.10.10">
    <property type="entry name" value="Leucine-rich Repeat Variant"/>
    <property type="match status" value="1"/>
</dbReference>
<dbReference type="InterPro" id="IPR011989">
    <property type="entry name" value="ARM-like"/>
</dbReference>
<dbReference type="InterPro" id="IPR016024">
    <property type="entry name" value="ARM-type_fold"/>
</dbReference>
<dbReference type="InterPro" id="IPR055406">
    <property type="entry name" value="HEAT_Maestro"/>
</dbReference>
<dbReference type="InterPro" id="IPR055408">
    <property type="entry name" value="HEAT_MROH2B-like"/>
</dbReference>
<dbReference type="InterPro" id="IPR048465">
    <property type="entry name" value="Maestro-like_HEAT"/>
</dbReference>
<dbReference type="InterPro" id="IPR045206">
    <property type="entry name" value="Maestro_heat-like_prot"/>
</dbReference>
<dbReference type="PANTHER" id="PTHR23120:SF17">
    <property type="entry name" value="MAESTRO HEAT-LIKE REPEAT-CONTAINING PROTEIN FAMILY MEMBER 7"/>
    <property type="match status" value="1"/>
</dbReference>
<dbReference type="PANTHER" id="PTHR23120">
    <property type="entry name" value="MAESTRO-RELATED HEAT DOMAIN-CONTAINING"/>
    <property type="match status" value="1"/>
</dbReference>
<dbReference type="Pfam" id="PF21047">
    <property type="entry name" value="HEAT_Maestro"/>
    <property type="match status" value="1"/>
</dbReference>
<dbReference type="Pfam" id="PF23210">
    <property type="entry name" value="HEAT_Maestro_2"/>
    <property type="match status" value="1"/>
</dbReference>
<dbReference type="Pfam" id="PF23227">
    <property type="entry name" value="HEAT_MROH2B_C"/>
    <property type="match status" value="1"/>
</dbReference>
<dbReference type="SUPFAM" id="SSF48371">
    <property type="entry name" value="ARM repeat"/>
    <property type="match status" value="2"/>
</dbReference>
<keyword id="KW-0325">Glycoprotein</keyword>
<keyword id="KW-0472">Membrane</keyword>
<keyword id="KW-0597">Phosphoprotein</keyword>
<keyword id="KW-1185">Reference proteome</keyword>
<keyword id="KW-0677">Repeat</keyword>
<keyword id="KW-0812">Transmembrane</keyword>
<keyword id="KW-1133">Transmembrane helix</keyword>
<gene>
    <name type="primary">Mroh7</name>
    <name type="synonym">Gm1027</name>
    <name type="synonym">Heatr8</name>
</gene>
<protein>
    <recommendedName>
        <fullName>Maestro heat-like repeat-containing protein family member 7</fullName>
    </recommendedName>
    <alternativeName>
        <fullName>HEAT repeat-containing protein 8</fullName>
    </alternativeName>
</protein>
<sequence>MALSRGTSLILHEDPEKIPSPNSCEVPGIMSNTTPRPTPDLALAPPPEHALALTPALHPALSPDPEGVSGPVSNDIPSHNASGATTPSSTQINTVDTADQGLNHTSGPDAAGTLCPDSQPARIPSSTQANVLSPENSSRPCSEDVSKSFSSKVFGLGQSNSNPSRPEPNLYIKALSREALVRSHNISRQGSQVPLLLPSNTSLDRLHSGNISKVNLGIAPNSNEAITLTSHTIFASISKEALSAPWNTGSKGSINGTSTIQPRSGLNVTVTHASHVSMIPGSSEGLSLQSSARVPNSTLSPSSCMTLIMDSESPSMDSSFLVTDTSTLTLSSHRDYSEDNSIRTMPLEENLGKWDSLQGVTALQSPPEGTSEDVKVNEAEKRNHDNKAALVANIITYQKNQEMVEMKEEKEATVKMMMRQIQEEPLDSLLSPARRQAMEILAQLSHTKPILSVRERVELVNTCVRSVFSLPSVQAMQEKDESKAEVIQILYYQTLDSLQKLLNALFIEDPTPTGLKSILEPLGPWMNSGKAHERARAVNSNVSVLNHTLVTLPFLISSGFPTLGLLLGRLLLRIGDPDEEIGREALDGITILYTILDLQKRTKNKEDTNKKELYENNKRFLGPYNPVSPCQNILRVIAEFGDFLGPQQVRDLLLAALEGLKGISETQGKDSGEMMQLASEVMLSSVLEWYRHRALEVIPEIMQGIYMQLTHIQEPRAREVALLPISFLASSFMTEVVVALLMCPLPLDSNGAEMWRQLILRKPSCDVRDLLDLLLTSLKEKPVTKKGRASIVPLAAASGLCELLSVNSCVGRVRRIYPQLLLALLIQVHYHIGLNLPSRMAPRKDSKDDTQPPLFIPVRWMVKVVKTLLLKMGCSYESAFLEEQGGWELMGQAESHYRGVSLLARAMVHYSCQELCRILYLLIPLLERGDERHKITATAFFVELFRMEQVRRIPEEYSLGRMVEGLSHRDPIMNVLSIRGLVILACKSEKMAKVQSLLPSMVKSLKNMDGMLVVEAVHDLKRIFKGQGKKLTDSAVYVEMLQILLPHFTDAREMVRASCINVYGKVVKKLQTPRTQAMEEQLTSTLMPLLFIIQEGNAKVSQKCVKTLVCCSSFMNWELPKKAYSQKPWDNQQLTVTKICKYLVSSHRDNVFTFLNQSLEYAKNSRASLRKSSVIFIGSLVPCMENMMTEERLNEVKATLEILRHDPEASVCICAAQAQDQIMATCWRNSWPLLYGDSWVCDPSSMHRWSPSCENLPTSHQRRSWIMQALASWKMSLKQ</sequence>
<evidence type="ECO:0000250" key="1">
    <source>
        <dbReference type="UniProtKB" id="A2RUW0"/>
    </source>
</evidence>
<evidence type="ECO:0000255" key="2"/>
<evidence type="ECO:0000256" key="3">
    <source>
        <dbReference type="SAM" id="MobiDB-lite"/>
    </source>
</evidence>
<evidence type="ECO:0000305" key="4"/>
<feature type="chain" id="PRO_0000286867" description="Maestro heat-like repeat-containing protein family member 7">
    <location>
        <begin position="1"/>
        <end position="1279"/>
    </location>
</feature>
<feature type="transmembrane region" description="Helical" evidence="2">
    <location>
        <begin position="548"/>
        <end position="568"/>
    </location>
</feature>
<feature type="transmembrane region" description="Helical" evidence="2">
    <location>
        <begin position="722"/>
        <end position="742"/>
    </location>
</feature>
<feature type="repeat" description="HEAT 1">
    <location>
        <begin position="913"/>
        <end position="950"/>
    </location>
</feature>
<feature type="repeat" description="HEAT 2">
    <location>
        <begin position="992"/>
        <end position="1029"/>
    </location>
</feature>
<feature type="repeat" description="HEAT 3">
    <location>
        <begin position="1035"/>
        <end position="1072"/>
    </location>
</feature>
<feature type="repeat" description="HEAT 4">
    <location>
        <begin position="1080"/>
        <end position="1117"/>
    </location>
</feature>
<feature type="region of interest" description="Disordered" evidence="3">
    <location>
        <begin position="1"/>
        <end position="145"/>
    </location>
</feature>
<feature type="compositionally biased region" description="Low complexity" evidence="3">
    <location>
        <begin position="39"/>
        <end position="61"/>
    </location>
</feature>
<feature type="compositionally biased region" description="Polar residues" evidence="3">
    <location>
        <begin position="71"/>
        <end position="106"/>
    </location>
</feature>
<feature type="compositionally biased region" description="Polar residues" evidence="3">
    <location>
        <begin position="124"/>
        <end position="140"/>
    </location>
</feature>
<feature type="modified residue" description="Phosphoserine" evidence="1">
    <location>
        <position position="356"/>
    </location>
</feature>
<feature type="glycosylation site" description="N-linked (GlcNAc...) asparagine" evidence="2">
    <location>
        <position position="200"/>
    </location>
</feature>
<feature type="glycosylation site" description="N-linked (GlcNAc...) asparagine" evidence="2">
    <location>
        <position position="210"/>
    </location>
</feature>
<feature type="glycosylation site" description="N-linked (GlcNAc...) asparagine" evidence="2">
    <location>
        <position position="255"/>
    </location>
</feature>
<feature type="glycosylation site" description="N-linked (GlcNAc...) asparagine" evidence="2">
    <location>
        <position position="267"/>
    </location>
</feature>
<feature type="glycosylation site" description="N-linked (GlcNAc...) asparagine" evidence="2">
    <location>
        <position position="296"/>
    </location>
</feature>
<feature type="glycosylation site" description="N-linked (GlcNAc...) asparagine" evidence="2">
    <location>
        <position position="541"/>
    </location>
</feature>
<comment type="subcellular location">
    <subcellularLocation>
        <location evidence="4">Membrane</location>
        <topology evidence="4">Multi-pass membrane protein</topology>
    </subcellularLocation>
</comment>
<name>MROH7_MOUSE</name>
<proteinExistence type="inferred from homology"/>